<accession>P19972</accession>
<evidence type="ECO:0000255" key="1"/>
<evidence type="ECO:0007829" key="2">
    <source>
        <dbReference type="PDB" id="1KVD"/>
    </source>
</evidence>
<evidence type="ECO:0007829" key="3">
    <source>
        <dbReference type="PDB" id="1KVE"/>
    </source>
</evidence>
<sequence>MRKETLIGLAFITANVIAWSLRWRMQKSTTIAAIAGCSGAATFGGLAGGIVGCIAAGILAILQGFEVNWHNGGGGDRSNPVKRSSDSFSIVNHNGEKVDSYAHLVPGKVGKVIIDNIELSAIRYANNHTSLGYHFTSDGSGPAARGEATTIWGVGADEAIDKGTPSKNDLQNMSADLAKNGFKGHQGVACSTVKDGNKDVYMIKFSLAGGSNDPGGSPCSDD</sequence>
<feature type="signal peptide">
    <location>
        <begin position="1"/>
        <end position="18"/>
    </location>
</feature>
<feature type="chain" id="PRO_0000022565" description="Salt-mediated killer toxin 1 alpha chain">
    <location>
        <begin position="19"/>
        <end position="81"/>
    </location>
</feature>
<feature type="chain" id="PRO_0000022566" description="Salt-mediated killer toxin 1 gamma chain">
    <location>
        <begin position="82"/>
        <end position="145"/>
    </location>
</feature>
<feature type="chain" id="PRO_0000022567" description="Salt-mediated killer toxin 1 beta chain">
    <location>
        <begin position="146"/>
        <end position="222"/>
    </location>
</feature>
<feature type="glycosylation site" description="N-linked (GlcNAc...) asparagine" evidence="1">
    <location>
        <position position="127"/>
    </location>
</feature>
<feature type="disulfide bond">
    <location>
        <begin position="37"/>
        <end position="53"/>
    </location>
</feature>
<feature type="disulfide bond">
    <location>
        <begin position="190"/>
        <end position="219"/>
    </location>
</feature>
<feature type="strand" evidence="2">
    <location>
        <begin position="20"/>
        <end position="28"/>
    </location>
</feature>
<feature type="helix" evidence="3">
    <location>
        <begin position="43"/>
        <end position="45"/>
    </location>
</feature>
<feature type="helix" evidence="2">
    <location>
        <begin position="49"/>
        <end position="71"/>
    </location>
</feature>
<feature type="strand" evidence="2">
    <location>
        <begin position="75"/>
        <end position="80"/>
    </location>
</feature>
<feature type="strand" evidence="2">
    <location>
        <begin position="150"/>
        <end position="159"/>
    </location>
</feature>
<feature type="helix" evidence="2">
    <location>
        <begin position="167"/>
        <end position="180"/>
    </location>
</feature>
<feature type="turn" evidence="2">
    <location>
        <begin position="181"/>
        <end position="184"/>
    </location>
</feature>
<feature type="strand" evidence="2">
    <location>
        <begin position="187"/>
        <end position="195"/>
    </location>
</feature>
<feature type="strand" evidence="2">
    <location>
        <begin position="198"/>
        <end position="207"/>
    </location>
</feature>
<keyword id="KW-0002">3D-structure</keyword>
<keyword id="KW-0165">Cleavage on pair of basic residues</keyword>
<keyword id="KW-0903">Direct protein sequencing</keyword>
<keyword id="KW-1015">Disulfide bond</keyword>
<keyword id="KW-0325">Glycoprotein</keyword>
<keyword id="KW-0732">Signal</keyword>
<keyword id="KW-0800">Toxin</keyword>
<protein>
    <recommendedName>
        <fullName>Salt-mediated killer protoxin 1</fullName>
    </recommendedName>
    <component>
        <recommendedName>
            <fullName>Salt-mediated killer toxin 1 alpha chain</fullName>
            <shortName>SMK toxin alpha chain</shortName>
        </recommendedName>
    </component>
    <component>
        <recommendedName>
            <fullName>Salt-mediated killer toxin 1 gamma chain</fullName>
            <shortName>SMK toxin gamma chain</shortName>
        </recommendedName>
    </component>
    <component>
        <recommendedName>
            <fullName>Salt-mediated killer toxin 1 beta chain</fullName>
            <shortName>SMK toxin beta chain</shortName>
        </recommendedName>
    </component>
</protein>
<comment type="function">
    <text>This toxin kills sensitive strains of yeast.</text>
</comment>
<comment type="subunit">
    <text>Heterodimer of an alpha and a beta chain. The fate of the gamma chain is unknown.</text>
</comment>
<comment type="miscellaneous">
    <text>The full activity of this toxin depends on NaCl or KCL. Its maximum activity is found at 2M salt solution.</text>
</comment>
<organism>
    <name type="scientific">Millerozyma farinosa</name>
    <name type="common">Yeast</name>
    <name type="synonym">Pichia farinosa</name>
    <dbReference type="NCBI Taxonomy" id="4920"/>
    <lineage>
        <taxon>Eukaryota</taxon>
        <taxon>Fungi</taxon>
        <taxon>Dikarya</taxon>
        <taxon>Ascomycota</taxon>
        <taxon>Saccharomycotina</taxon>
        <taxon>Pichiomycetes</taxon>
        <taxon>Debaryomycetaceae</taxon>
        <taxon>Millerozyma</taxon>
    </lineage>
</organism>
<dbReference type="EMBL" id="D14538">
    <property type="protein sequence ID" value="BAA03405.2"/>
    <property type="molecule type" value="Genomic_DNA"/>
</dbReference>
<dbReference type="PIR" id="A49995">
    <property type="entry name" value="A49995"/>
</dbReference>
<dbReference type="PIR" id="PQ0007">
    <property type="entry name" value="PQ0007"/>
</dbReference>
<dbReference type="PDB" id="1KVD">
    <property type="method" value="X-ray"/>
    <property type="resolution" value="1.80 A"/>
    <property type="chains" value="A/C=19-81, B/D=146-222"/>
</dbReference>
<dbReference type="PDB" id="1KVE">
    <property type="method" value="X-ray"/>
    <property type="resolution" value="1.80 A"/>
    <property type="chains" value="A/C=19-81, B/D=146-222"/>
</dbReference>
<dbReference type="PDBsum" id="1KVD"/>
<dbReference type="PDBsum" id="1KVE"/>
<dbReference type="SMR" id="P19972"/>
<dbReference type="GlyCosmos" id="P19972">
    <property type="glycosylation" value="1 site, No reported glycans"/>
</dbReference>
<dbReference type="EvolutionaryTrace" id="P19972"/>
<dbReference type="GO" id="GO:0005576">
    <property type="term" value="C:extracellular region"/>
    <property type="evidence" value="ECO:0000314"/>
    <property type="project" value="CAFA"/>
</dbReference>
<dbReference type="GO" id="GO:0032991">
    <property type="term" value="C:protein-containing complex"/>
    <property type="evidence" value="ECO:0000314"/>
    <property type="project" value="CAFA"/>
</dbReference>
<dbReference type="GO" id="GO:0090729">
    <property type="term" value="F:toxin activity"/>
    <property type="evidence" value="ECO:0000314"/>
    <property type="project" value="CAFA"/>
</dbReference>
<dbReference type="GO" id="GO:0097351">
    <property type="term" value="F:toxin sequestering activity"/>
    <property type="evidence" value="ECO:0000269"/>
    <property type="project" value="DisProt"/>
</dbReference>
<dbReference type="GO" id="GO:0031640">
    <property type="term" value="P:killing of cells of another organism"/>
    <property type="evidence" value="ECO:0000314"/>
    <property type="project" value="CAFA"/>
</dbReference>
<dbReference type="CDD" id="cd12838">
    <property type="entry name" value="Killer_toxin_alpha"/>
    <property type="match status" value="1"/>
</dbReference>
<dbReference type="CDD" id="cd12839">
    <property type="entry name" value="Killer_toxin_beta"/>
    <property type="match status" value="1"/>
</dbReference>
<dbReference type="DisProt" id="DP00180"/>
<dbReference type="FunFam" id="3.30.44.10:FF:000001">
    <property type="entry name" value="Salt-mediated killer protoxin 1"/>
    <property type="match status" value="1"/>
</dbReference>
<dbReference type="Gene3D" id="4.10.420.10">
    <property type="entry name" value="Smk Toxin, alpha chain"/>
    <property type="match status" value="1"/>
</dbReference>
<dbReference type="Gene3D" id="3.30.44.10">
    <property type="entry name" value="Smk Toxin, beta chain"/>
    <property type="match status" value="1"/>
</dbReference>
<dbReference type="InterPro" id="IPR011329">
    <property type="entry name" value="Killer_tox_Kp4/SMK"/>
</dbReference>
<dbReference type="InterPro" id="IPR011327">
    <property type="entry name" value="Killer_tox_SMK_b"/>
</dbReference>
<dbReference type="InterPro" id="IPR038431">
    <property type="entry name" value="Killer_tox_SMK_b_sf"/>
</dbReference>
<dbReference type="InterPro" id="IPR048754">
    <property type="entry name" value="SMK1_alpha_su"/>
</dbReference>
<dbReference type="InterPro" id="IPR011328">
    <property type="entry name" value="SMK_a"/>
</dbReference>
<dbReference type="Pfam" id="PF21415">
    <property type="entry name" value="SMK1_alpha_su"/>
    <property type="match status" value="1"/>
</dbReference>
<dbReference type="Pfam" id="PF21414">
    <property type="entry name" value="SMK_beta_su"/>
    <property type="match status" value="1"/>
</dbReference>
<dbReference type="SUPFAM" id="SSF55221">
    <property type="entry name" value="Yeast killer toxins"/>
    <property type="match status" value="2"/>
</dbReference>
<name>TOXK_MILFA</name>
<gene>
    <name type="primary">SMK1</name>
</gene>
<proteinExistence type="evidence at protein level"/>
<reference key="1">
    <citation type="journal article" date="1994" name="J. Biol. Chem.">
        <title>The primary and subunit structure of a novel type killer toxin produced by a halotolerant yeast, Pichia farinosa.</title>
        <authorList>
            <person name="Suzuki C."/>
            <person name="Nikkuni S."/>
        </authorList>
    </citation>
    <scope>NUCLEOTIDE SEQUENCE [GENOMIC DNA]</scope>
    <scope>PARTIAL PROTEIN SEQUENCE</scope>
    <source>
        <strain>KK1</strain>
    </source>
</reference>
<reference key="2">
    <citation type="submission" date="2000-02" db="EMBL/GenBank/DDBJ databases">
        <authorList>
            <person name="Suzuki C."/>
            <person name="Nikkuni S."/>
        </authorList>
    </citation>
    <scope>SEQUENCE REVISION TO 87; 137; 162; 167 AND 206</scope>
</reference>
<reference key="3">
    <citation type="journal article" date="1989" name="Agric. Biol. Chem.">
        <title>Purification and properties of the killer toxin produced by a halotolerant yeast, Pichia farinosa.</title>
        <authorList>
            <person name="Suzuki C."/>
            <person name="Nikkuni S."/>
        </authorList>
    </citation>
    <scope>PRELIMINARY PROTEIN SEQUENCE OF 146-167</scope>
    <source>
        <strain>KK1</strain>
    </source>
</reference>
<reference key="4">
    <citation type="journal article" date="1997" name="Structure">
        <title>The novel acidophilic structure of the killer toxin from halotolerant yeast demonstrates remarkable folding similarity with a fungal killer toxin.</title>
        <authorList>
            <person name="Kashiwagi T."/>
            <person name="Kunishima N."/>
            <person name="Suzuki C."/>
            <person name="Tsuchiya F."/>
            <person name="Nikkuni S."/>
            <person name="Arata Y."/>
            <person name="Morikawa K."/>
        </authorList>
    </citation>
    <scope>X-RAY CRYSTALLOGRAPHY (1.8 ANGSTROMS)</scope>
    <source>
        <strain>KK1</strain>
    </source>
</reference>